<dbReference type="EC" id="6.1.1.23" evidence="1"/>
<dbReference type="EMBL" id="AE006641">
    <property type="protein sequence ID" value="AAK40519.1"/>
    <property type="molecule type" value="Genomic_DNA"/>
</dbReference>
<dbReference type="PIR" id="H90157">
    <property type="entry name" value="H90157"/>
</dbReference>
<dbReference type="RefSeq" id="WP_009990398.1">
    <property type="nucleotide sequence ID" value="NC_002754.1"/>
</dbReference>
<dbReference type="SMR" id="Q980V3"/>
<dbReference type="FunCoup" id="Q980V3">
    <property type="interactions" value="349"/>
</dbReference>
<dbReference type="STRING" id="273057.SSO0173"/>
<dbReference type="PaxDb" id="273057-SSO0173"/>
<dbReference type="EnsemblBacteria" id="AAK40519">
    <property type="protein sequence ID" value="AAK40519"/>
    <property type="gene ID" value="SSO0173"/>
</dbReference>
<dbReference type="GeneID" id="44129139"/>
<dbReference type="KEGG" id="sso:SSO0173"/>
<dbReference type="PATRIC" id="fig|273057.12.peg.169"/>
<dbReference type="eggNOG" id="arCOG00406">
    <property type="taxonomic scope" value="Archaea"/>
</dbReference>
<dbReference type="HOGENOM" id="CLU_004553_2_1_2"/>
<dbReference type="InParanoid" id="Q980V3"/>
<dbReference type="PhylomeDB" id="Q980V3"/>
<dbReference type="Proteomes" id="UP000001974">
    <property type="component" value="Chromosome"/>
</dbReference>
<dbReference type="GO" id="GO:0017101">
    <property type="term" value="C:aminoacyl-tRNA synthetase multienzyme complex"/>
    <property type="evidence" value="ECO:0000318"/>
    <property type="project" value="GO_Central"/>
</dbReference>
<dbReference type="GO" id="GO:0005829">
    <property type="term" value="C:cytosol"/>
    <property type="evidence" value="ECO:0000318"/>
    <property type="project" value="GO_Central"/>
</dbReference>
<dbReference type="GO" id="GO:0004815">
    <property type="term" value="F:aspartate-tRNA ligase activity"/>
    <property type="evidence" value="ECO:0000318"/>
    <property type="project" value="GO_Central"/>
</dbReference>
<dbReference type="GO" id="GO:0050560">
    <property type="term" value="F:aspartate-tRNA(Asn) ligase activity"/>
    <property type="evidence" value="ECO:0007669"/>
    <property type="project" value="UniProtKB-EC"/>
</dbReference>
<dbReference type="GO" id="GO:0005524">
    <property type="term" value="F:ATP binding"/>
    <property type="evidence" value="ECO:0007669"/>
    <property type="project" value="UniProtKB-UniRule"/>
</dbReference>
<dbReference type="GO" id="GO:0000287">
    <property type="term" value="F:magnesium ion binding"/>
    <property type="evidence" value="ECO:0007669"/>
    <property type="project" value="UniProtKB-UniRule"/>
</dbReference>
<dbReference type="GO" id="GO:0003723">
    <property type="term" value="F:RNA binding"/>
    <property type="evidence" value="ECO:0000318"/>
    <property type="project" value="GO_Central"/>
</dbReference>
<dbReference type="GO" id="GO:0006422">
    <property type="term" value="P:aspartyl-tRNA aminoacylation"/>
    <property type="evidence" value="ECO:0000318"/>
    <property type="project" value="GO_Central"/>
</dbReference>
<dbReference type="CDD" id="cd00776">
    <property type="entry name" value="AsxRS_core"/>
    <property type="match status" value="1"/>
</dbReference>
<dbReference type="FunFam" id="3.30.930.10:FF:000038">
    <property type="entry name" value="Aspartate--tRNA ligase"/>
    <property type="match status" value="1"/>
</dbReference>
<dbReference type="Gene3D" id="3.30.930.10">
    <property type="entry name" value="Bira Bifunctional Protein, Domain 2"/>
    <property type="match status" value="1"/>
</dbReference>
<dbReference type="Gene3D" id="2.40.50.140">
    <property type="entry name" value="Nucleic acid-binding proteins"/>
    <property type="match status" value="1"/>
</dbReference>
<dbReference type="HAMAP" id="MF_02075">
    <property type="entry name" value="Asp_tRNA_synth_type2"/>
    <property type="match status" value="1"/>
</dbReference>
<dbReference type="InterPro" id="IPR004364">
    <property type="entry name" value="Aa-tRNA-synt_II"/>
</dbReference>
<dbReference type="InterPro" id="IPR006195">
    <property type="entry name" value="aa-tRNA-synth_II"/>
</dbReference>
<dbReference type="InterPro" id="IPR045864">
    <property type="entry name" value="aa-tRNA-synth_II/BPL/LPL"/>
</dbReference>
<dbReference type="InterPro" id="IPR004523">
    <property type="entry name" value="Asp-tRNA_synthase_2"/>
</dbReference>
<dbReference type="InterPro" id="IPR002312">
    <property type="entry name" value="Asp/Asn-tRNA-synth_IIb"/>
</dbReference>
<dbReference type="InterPro" id="IPR012340">
    <property type="entry name" value="NA-bd_OB-fold"/>
</dbReference>
<dbReference type="InterPro" id="IPR004365">
    <property type="entry name" value="NA-bd_OB_tRNA"/>
</dbReference>
<dbReference type="NCBIfam" id="TIGR00458">
    <property type="entry name" value="aspS_nondisc"/>
    <property type="match status" value="1"/>
</dbReference>
<dbReference type="NCBIfam" id="NF003483">
    <property type="entry name" value="PRK05159.1"/>
    <property type="match status" value="1"/>
</dbReference>
<dbReference type="PANTHER" id="PTHR43450:SF1">
    <property type="entry name" value="ASPARTATE--TRNA LIGASE, CYTOPLASMIC"/>
    <property type="match status" value="1"/>
</dbReference>
<dbReference type="PANTHER" id="PTHR43450">
    <property type="entry name" value="ASPARTYL-TRNA SYNTHETASE"/>
    <property type="match status" value="1"/>
</dbReference>
<dbReference type="Pfam" id="PF00152">
    <property type="entry name" value="tRNA-synt_2"/>
    <property type="match status" value="1"/>
</dbReference>
<dbReference type="Pfam" id="PF01336">
    <property type="entry name" value="tRNA_anti-codon"/>
    <property type="match status" value="1"/>
</dbReference>
<dbReference type="PRINTS" id="PR01042">
    <property type="entry name" value="TRNASYNTHASP"/>
</dbReference>
<dbReference type="SUPFAM" id="SSF55681">
    <property type="entry name" value="Class II aaRS and biotin synthetases"/>
    <property type="match status" value="1"/>
</dbReference>
<dbReference type="SUPFAM" id="SSF50249">
    <property type="entry name" value="Nucleic acid-binding proteins"/>
    <property type="match status" value="1"/>
</dbReference>
<dbReference type="PROSITE" id="PS50862">
    <property type="entry name" value="AA_TRNA_LIGASE_II"/>
    <property type="match status" value="1"/>
</dbReference>
<proteinExistence type="inferred from homology"/>
<organism>
    <name type="scientific">Saccharolobus solfataricus (strain ATCC 35092 / DSM 1617 / JCM 11322 / P2)</name>
    <name type="common">Sulfolobus solfataricus</name>
    <dbReference type="NCBI Taxonomy" id="273057"/>
    <lineage>
        <taxon>Archaea</taxon>
        <taxon>Thermoproteota</taxon>
        <taxon>Thermoprotei</taxon>
        <taxon>Sulfolobales</taxon>
        <taxon>Sulfolobaceae</taxon>
        <taxon>Saccharolobus</taxon>
    </lineage>
</organism>
<gene>
    <name evidence="1" type="primary">aspS</name>
    <name type="ordered locus">SSO0173</name>
</gene>
<keyword id="KW-0030">Aminoacyl-tRNA synthetase</keyword>
<keyword id="KW-0067">ATP-binding</keyword>
<keyword id="KW-0963">Cytoplasm</keyword>
<keyword id="KW-0436">Ligase</keyword>
<keyword id="KW-0460">Magnesium</keyword>
<keyword id="KW-0479">Metal-binding</keyword>
<keyword id="KW-0547">Nucleotide-binding</keyword>
<keyword id="KW-0648">Protein biosynthesis</keyword>
<keyword id="KW-1185">Reference proteome</keyword>
<feature type="chain" id="PRO_0000111006" description="Aspartate--tRNA(Asp/Asn) ligase">
    <location>
        <begin position="1"/>
        <end position="429"/>
    </location>
</feature>
<feature type="region of interest" description="Aspartate" evidence="1">
    <location>
        <begin position="189"/>
        <end position="192"/>
    </location>
</feature>
<feature type="binding site" evidence="1">
    <location>
        <position position="167"/>
    </location>
    <ligand>
        <name>L-aspartate</name>
        <dbReference type="ChEBI" id="CHEBI:29991"/>
    </ligand>
</feature>
<feature type="binding site" evidence="1">
    <location>
        <begin position="210"/>
        <end position="212"/>
    </location>
    <ligand>
        <name>ATP</name>
        <dbReference type="ChEBI" id="CHEBI:30616"/>
    </ligand>
</feature>
<feature type="binding site" evidence="1">
    <location>
        <position position="210"/>
    </location>
    <ligand>
        <name>L-aspartate</name>
        <dbReference type="ChEBI" id="CHEBI:29991"/>
    </ligand>
</feature>
<feature type="binding site" evidence="1">
    <location>
        <position position="352"/>
    </location>
    <ligand>
        <name>ATP</name>
        <dbReference type="ChEBI" id="CHEBI:30616"/>
    </ligand>
</feature>
<feature type="binding site" evidence="1">
    <location>
        <position position="352"/>
    </location>
    <ligand>
        <name>Mg(2+)</name>
        <dbReference type="ChEBI" id="CHEBI:18420"/>
        <label>2</label>
    </ligand>
</feature>
<feature type="binding site" evidence="1">
    <location>
        <position position="352"/>
    </location>
    <ligand>
        <name>Mg(2+)</name>
        <dbReference type="ChEBI" id="CHEBI:18420"/>
        <label>3</label>
    </ligand>
</feature>
<feature type="binding site" evidence="1">
    <location>
        <position position="355"/>
    </location>
    <ligand>
        <name>L-aspartate</name>
        <dbReference type="ChEBI" id="CHEBI:29991"/>
    </ligand>
</feature>
<feature type="binding site" evidence="1">
    <location>
        <position position="355"/>
    </location>
    <ligand>
        <name>Mg(2+)</name>
        <dbReference type="ChEBI" id="CHEBI:18420"/>
        <label>2</label>
    </ligand>
</feature>
<feature type="binding site" evidence="1">
    <location>
        <position position="359"/>
    </location>
    <ligand>
        <name>L-aspartate</name>
        <dbReference type="ChEBI" id="CHEBI:29991"/>
    </ligand>
</feature>
<feature type="binding site" evidence="1">
    <location>
        <begin position="400"/>
        <end position="403"/>
    </location>
    <ligand>
        <name>ATP</name>
        <dbReference type="ChEBI" id="CHEBI:30616"/>
    </ligand>
</feature>
<feature type="site" description="Important for tRNA non-discrimination" evidence="1">
    <location>
        <position position="82"/>
    </location>
</feature>
<evidence type="ECO:0000255" key="1">
    <source>
        <dbReference type="HAMAP-Rule" id="MF_02075"/>
    </source>
</evidence>
<sequence>MFRTHLVSELNPKLDGSEVKVAGWVHNVRNLGGKIFILLRDKSGIGQIVVEKGNNAYDKVINIGLESTIVVNGVVKADARAPNGVEVHAKDIEILSYARSPLPLDVTGKVKADIDTRLRERLLDLRRLEMQAVLKIQSVAVKSFRETLYKHGFVEVFTPKIIASATEGGAQLFPVLYFGKEAFLAQSPQLYKELLAGAIERVFEIAPAWRAEESDTPYHLSEFISMDVEMAFADYNDIMALIEQIIYNMINDVKRECENELKILNYTPPNVRIPIKKVSYSDAIELLKSKGVNIKFGDDIGTPELRVLYNELKEDLYFVTDWPWLSRPFYTKQKKDNPQLSESFDLIFRWLEIVSGSSRNHVKEVLENSLKVRGLNPESFEFFLKWFDYGMPPHAGFGMGLARVMLMLTGLQSVKEVVPFPRDKKRLTP</sequence>
<protein>
    <recommendedName>
        <fullName evidence="1">Aspartate--tRNA(Asp/Asn) ligase</fullName>
        <ecNumber evidence="1">6.1.1.23</ecNumber>
    </recommendedName>
    <alternativeName>
        <fullName evidence="1">Aspartyl-tRNA synthetase</fullName>
        <shortName evidence="1">AspRS</shortName>
    </alternativeName>
    <alternativeName>
        <fullName evidence="1">Non-discriminating aspartyl-tRNA synthetase</fullName>
        <shortName evidence="1">ND-AspRS</shortName>
    </alternativeName>
</protein>
<comment type="function">
    <text evidence="1">Aspartyl-tRNA synthetase with relaxed tRNA specificity since it is able to aspartylate not only its cognate tRNA(Asp) but also tRNA(Asn). Reaction proceeds in two steps: L-aspartate is first activated by ATP to form Asp-AMP and then transferred to the acceptor end of tRNA(Asp/Asn).</text>
</comment>
<comment type="catalytic activity">
    <reaction evidence="1">
        <text>tRNA(Asx) + L-aspartate + ATP = L-aspartyl-tRNA(Asx) + AMP + diphosphate</text>
        <dbReference type="Rhea" id="RHEA:18349"/>
        <dbReference type="Rhea" id="RHEA-COMP:9710"/>
        <dbReference type="Rhea" id="RHEA-COMP:9711"/>
        <dbReference type="ChEBI" id="CHEBI:29991"/>
        <dbReference type="ChEBI" id="CHEBI:30616"/>
        <dbReference type="ChEBI" id="CHEBI:33019"/>
        <dbReference type="ChEBI" id="CHEBI:78442"/>
        <dbReference type="ChEBI" id="CHEBI:78516"/>
        <dbReference type="ChEBI" id="CHEBI:456215"/>
        <dbReference type="EC" id="6.1.1.23"/>
    </reaction>
</comment>
<comment type="cofactor">
    <cofactor evidence="1">
        <name>Mg(2+)</name>
        <dbReference type="ChEBI" id="CHEBI:18420"/>
    </cofactor>
    <text evidence="1">Binds 3 Mg(2+) cations per subunit. The strongest magnesium site (Mg1) is bound to the beta- and gamma-phosphates of ATP and four water molecules complete its coordination sphere.</text>
</comment>
<comment type="subunit">
    <text evidence="1">Homodimer.</text>
</comment>
<comment type="subcellular location">
    <subcellularLocation>
        <location evidence="1">Cytoplasm</location>
    </subcellularLocation>
</comment>
<comment type="similarity">
    <text evidence="1">Belongs to the class-II aminoacyl-tRNA synthetase family. Type 2 subfamily.</text>
</comment>
<reference key="1">
    <citation type="journal article" date="2001" name="Proc. Natl. Acad. Sci. U.S.A.">
        <title>The complete genome of the crenarchaeon Sulfolobus solfataricus P2.</title>
        <authorList>
            <person name="She Q."/>
            <person name="Singh R.K."/>
            <person name="Confalonieri F."/>
            <person name="Zivanovic Y."/>
            <person name="Allard G."/>
            <person name="Awayez M.J."/>
            <person name="Chan-Weiher C.C.-Y."/>
            <person name="Clausen I.G."/>
            <person name="Curtis B.A."/>
            <person name="De Moors A."/>
            <person name="Erauso G."/>
            <person name="Fletcher C."/>
            <person name="Gordon P.M.K."/>
            <person name="Heikamp-de Jong I."/>
            <person name="Jeffries A.C."/>
            <person name="Kozera C.J."/>
            <person name="Medina N."/>
            <person name="Peng X."/>
            <person name="Thi-Ngoc H.P."/>
            <person name="Redder P."/>
            <person name="Schenk M.E."/>
            <person name="Theriault C."/>
            <person name="Tolstrup N."/>
            <person name="Charlebois R.L."/>
            <person name="Doolittle W.F."/>
            <person name="Duguet M."/>
            <person name="Gaasterland T."/>
            <person name="Garrett R.A."/>
            <person name="Ragan M.A."/>
            <person name="Sensen C.W."/>
            <person name="Van der Oost J."/>
        </authorList>
    </citation>
    <scope>NUCLEOTIDE SEQUENCE [LARGE SCALE GENOMIC DNA]</scope>
    <source>
        <strain>ATCC 35092 / DSM 1617 / JCM 11322 / P2</strain>
    </source>
</reference>
<name>SYDND_SACS2</name>
<accession>Q980V3</accession>